<organism>
    <name type="scientific">Chlamydia trachomatis serovar A (strain ATCC VR-571B / DSM 19440 / HAR-13)</name>
    <dbReference type="NCBI Taxonomy" id="315277"/>
    <lineage>
        <taxon>Bacteria</taxon>
        <taxon>Pseudomonadati</taxon>
        <taxon>Chlamydiota</taxon>
        <taxon>Chlamydiia</taxon>
        <taxon>Chlamydiales</taxon>
        <taxon>Chlamydiaceae</taxon>
        <taxon>Chlamydia/Chlamydophila group</taxon>
        <taxon>Chlamydia</taxon>
    </lineage>
</organism>
<gene>
    <name evidence="1" type="primary">accA</name>
    <name type="ordered locus">CTA_0287</name>
</gene>
<proteinExistence type="inferred from homology"/>
<feature type="chain" id="PRO_1000062605" description="Acetyl-coenzyme A carboxylase carboxyl transferase subunit alpha">
    <location>
        <begin position="1"/>
        <end position="324"/>
    </location>
</feature>
<feature type="domain" description="CoA carboxyltransferase C-terminal" evidence="2">
    <location>
        <begin position="37"/>
        <end position="291"/>
    </location>
</feature>
<sequence>MELLPHEKQVVEYEKTIAEFKEKNKENSLLSSSEIQKLDKRLDRLKEKIYSDLTPWERVQICRHPSRPRTVNYIEGMCEEFVELCGDRTFRDDPAVVGGFAKIQGQRFMLIGQEKGCDTKSRMHRNFGMLCPEGFRKALRLAKMAEKFGLPIIFLVDTPGAFPGLTAEERGQGWAIATNLFELARLATPIIVIVIGEGCSGGALGMAIGDVVAMLEHSYYSVISPEGCASILWKDPKKNSDAAAMLKMHGEDLKGFAIVDAVIKEPIGGAHHNPAATYRSVQEYVLQEWLKLKDLPVEELLEKRYQKFRTIGLYETSSESDSEA</sequence>
<comment type="function">
    <text evidence="1">Component of the acetyl coenzyme A carboxylase (ACC) complex. First, biotin carboxylase catalyzes the carboxylation of biotin on its carrier protein (BCCP) and then the CO(2) group is transferred by the carboxyltransferase to acetyl-CoA to form malonyl-CoA.</text>
</comment>
<comment type="catalytic activity">
    <reaction evidence="1">
        <text>N(6)-carboxybiotinyl-L-lysyl-[protein] + acetyl-CoA = N(6)-biotinyl-L-lysyl-[protein] + malonyl-CoA</text>
        <dbReference type="Rhea" id="RHEA:54728"/>
        <dbReference type="Rhea" id="RHEA-COMP:10505"/>
        <dbReference type="Rhea" id="RHEA-COMP:10506"/>
        <dbReference type="ChEBI" id="CHEBI:57288"/>
        <dbReference type="ChEBI" id="CHEBI:57384"/>
        <dbReference type="ChEBI" id="CHEBI:83144"/>
        <dbReference type="ChEBI" id="CHEBI:83145"/>
        <dbReference type="EC" id="2.1.3.15"/>
    </reaction>
</comment>
<comment type="pathway">
    <text evidence="1">Lipid metabolism; malonyl-CoA biosynthesis; malonyl-CoA from acetyl-CoA: step 1/1.</text>
</comment>
<comment type="subunit">
    <text evidence="1">Acetyl-CoA carboxylase is a heterohexamer composed of biotin carboxyl carrier protein (AccB), biotin carboxylase (AccC) and two subunits each of ACCase subunit alpha (AccA) and ACCase subunit beta (AccD).</text>
</comment>
<comment type="subcellular location">
    <subcellularLocation>
        <location evidence="1">Cytoplasm</location>
    </subcellularLocation>
</comment>
<comment type="similarity">
    <text evidence="1">Belongs to the AccA family.</text>
</comment>
<evidence type="ECO:0000255" key="1">
    <source>
        <dbReference type="HAMAP-Rule" id="MF_00823"/>
    </source>
</evidence>
<evidence type="ECO:0000255" key="2">
    <source>
        <dbReference type="PROSITE-ProRule" id="PRU01137"/>
    </source>
</evidence>
<keyword id="KW-0067">ATP-binding</keyword>
<keyword id="KW-0963">Cytoplasm</keyword>
<keyword id="KW-0275">Fatty acid biosynthesis</keyword>
<keyword id="KW-0276">Fatty acid metabolism</keyword>
<keyword id="KW-0444">Lipid biosynthesis</keyword>
<keyword id="KW-0443">Lipid metabolism</keyword>
<keyword id="KW-0547">Nucleotide-binding</keyword>
<keyword id="KW-0808">Transferase</keyword>
<dbReference type="EC" id="2.1.3.15" evidence="1"/>
<dbReference type="EMBL" id="CP000051">
    <property type="protein sequence ID" value="AAX50525.1"/>
    <property type="molecule type" value="Genomic_DNA"/>
</dbReference>
<dbReference type="RefSeq" id="WP_009871612.1">
    <property type="nucleotide sequence ID" value="NC_007429.1"/>
</dbReference>
<dbReference type="SMR" id="Q3KM97"/>
<dbReference type="KEGG" id="cta:CTA_0287"/>
<dbReference type="HOGENOM" id="CLU_015486_0_2_0"/>
<dbReference type="UniPathway" id="UPA00655">
    <property type="reaction ID" value="UER00711"/>
</dbReference>
<dbReference type="Proteomes" id="UP000002532">
    <property type="component" value="Chromosome"/>
</dbReference>
<dbReference type="GO" id="GO:0009317">
    <property type="term" value="C:acetyl-CoA carboxylase complex"/>
    <property type="evidence" value="ECO:0007669"/>
    <property type="project" value="InterPro"/>
</dbReference>
<dbReference type="GO" id="GO:0003989">
    <property type="term" value="F:acetyl-CoA carboxylase activity"/>
    <property type="evidence" value="ECO:0007669"/>
    <property type="project" value="InterPro"/>
</dbReference>
<dbReference type="GO" id="GO:0005524">
    <property type="term" value="F:ATP binding"/>
    <property type="evidence" value="ECO:0007669"/>
    <property type="project" value="UniProtKB-KW"/>
</dbReference>
<dbReference type="GO" id="GO:0016743">
    <property type="term" value="F:carboxyl- or carbamoyltransferase activity"/>
    <property type="evidence" value="ECO:0007669"/>
    <property type="project" value="UniProtKB-UniRule"/>
</dbReference>
<dbReference type="GO" id="GO:0006633">
    <property type="term" value="P:fatty acid biosynthetic process"/>
    <property type="evidence" value="ECO:0007669"/>
    <property type="project" value="UniProtKB-KW"/>
</dbReference>
<dbReference type="GO" id="GO:2001295">
    <property type="term" value="P:malonyl-CoA biosynthetic process"/>
    <property type="evidence" value="ECO:0007669"/>
    <property type="project" value="UniProtKB-UniRule"/>
</dbReference>
<dbReference type="Gene3D" id="3.90.226.10">
    <property type="entry name" value="2-enoyl-CoA Hydratase, Chain A, domain 1"/>
    <property type="match status" value="1"/>
</dbReference>
<dbReference type="HAMAP" id="MF_00823">
    <property type="entry name" value="AcetylCoA_CT_alpha"/>
    <property type="match status" value="1"/>
</dbReference>
<dbReference type="InterPro" id="IPR001095">
    <property type="entry name" value="Acetyl_CoA_COase_a_su"/>
</dbReference>
<dbReference type="InterPro" id="IPR029045">
    <property type="entry name" value="ClpP/crotonase-like_dom_sf"/>
</dbReference>
<dbReference type="InterPro" id="IPR011763">
    <property type="entry name" value="COA_CT_C"/>
</dbReference>
<dbReference type="NCBIfam" id="TIGR00513">
    <property type="entry name" value="accA"/>
    <property type="match status" value="1"/>
</dbReference>
<dbReference type="NCBIfam" id="NF041504">
    <property type="entry name" value="AccA_sub"/>
    <property type="match status" value="1"/>
</dbReference>
<dbReference type="NCBIfam" id="NF004344">
    <property type="entry name" value="PRK05724.1"/>
    <property type="match status" value="1"/>
</dbReference>
<dbReference type="PANTHER" id="PTHR42853">
    <property type="entry name" value="ACETYL-COENZYME A CARBOXYLASE CARBOXYL TRANSFERASE SUBUNIT ALPHA"/>
    <property type="match status" value="1"/>
</dbReference>
<dbReference type="PANTHER" id="PTHR42853:SF3">
    <property type="entry name" value="ACETYL-COENZYME A CARBOXYLASE CARBOXYL TRANSFERASE SUBUNIT ALPHA, CHLOROPLASTIC"/>
    <property type="match status" value="1"/>
</dbReference>
<dbReference type="Pfam" id="PF03255">
    <property type="entry name" value="ACCA"/>
    <property type="match status" value="1"/>
</dbReference>
<dbReference type="PRINTS" id="PR01069">
    <property type="entry name" value="ACCCTRFRASEA"/>
</dbReference>
<dbReference type="SUPFAM" id="SSF52096">
    <property type="entry name" value="ClpP/crotonase"/>
    <property type="match status" value="1"/>
</dbReference>
<dbReference type="PROSITE" id="PS50989">
    <property type="entry name" value="COA_CT_CTER"/>
    <property type="match status" value="1"/>
</dbReference>
<accession>Q3KM97</accession>
<reference key="1">
    <citation type="journal article" date="2005" name="Infect. Immun.">
        <title>Comparative genomic analysis of Chlamydia trachomatis oculotropic and genitotropic strains.</title>
        <authorList>
            <person name="Carlson J.H."/>
            <person name="Porcella S.F."/>
            <person name="McClarty G."/>
            <person name="Caldwell H.D."/>
        </authorList>
    </citation>
    <scope>NUCLEOTIDE SEQUENCE [LARGE SCALE GENOMIC DNA]</scope>
    <source>
        <strain>ATCC VR-571B / DSM 19440 / HAR-13</strain>
    </source>
</reference>
<protein>
    <recommendedName>
        <fullName evidence="1">Acetyl-coenzyme A carboxylase carboxyl transferase subunit alpha</fullName>
        <shortName evidence="1">ACCase subunit alpha</shortName>
        <shortName evidence="1">Acetyl-CoA carboxylase carboxyltransferase subunit alpha</shortName>
        <ecNumber evidence="1">2.1.3.15</ecNumber>
    </recommendedName>
</protein>
<name>ACCA_CHLTA</name>